<comment type="induction">
    <text evidence="1">Expressed in the late phase of the viral replicative cycle.</text>
</comment>
<comment type="similarity">
    <text evidence="1">Belongs to the asfivirus S183L family.</text>
</comment>
<keyword id="KW-0426">Late protein</keyword>
<organismHost>
    <name type="scientific">Ornithodoros</name>
    <name type="common">relapsing fever ticks</name>
    <dbReference type="NCBI Taxonomy" id="6937"/>
</organismHost>
<organismHost>
    <name type="scientific">Phacochoerus aethiopicus</name>
    <name type="common">Warthog</name>
    <dbReference type="NCBI Taxonomy" id="85517"/>
</organismHost>
<organismHost>
    <name type="scientific">Phacochoerus africanus</name>
    <name type="common">Warthog</name>
    <dbReference type="NCBI Taxonomy" id="41426"/>
</organismHost>
<organismHost>
    <name type="scientific">Potamochoerus larvatus</name>
    <name type="common">Bushpig</name>
    <dbReference type="NCBI Taxonomy" id="273792"/>
</organismHost>
<organismHost>
    <name type="scientific">Sus scrofa</name>
    <name type="common">Pig</name>
    <dbReference type="NCBI Taxonomy" id="9823"/>
</organismHost>
<dbReference type="EMBL" id="AY261363">
    <property type="status" value="NOT_ANNOTATED_CDS"/>
    <property type="molecule type" value="Genomic_DNA"/>
</dbReference>
<dbReference type="SMR" id="P0CA85"/>
<dbReference type="Proteomes" id="UP000000859">
    <property type="component" value="Segment"/>
</dbReference>
<feature type="chain" id="PRO_0000373570" description="Uncharacterized protein S183L">
    <location>
        <begin position="1"/>
        <end position="183"/>
    </location>
</feature>
<evidence type="ECO:0000305" key="1"/>
<name>VF183_ASFP4</name>
<reference key="1">
    <citation type="submission" date="2003-03" db="EMBL/GenBank/DDBJ databases">
        <title>African swine fever virus genomes.</title>
        <authorList>
            <person name="Kutish G.F."/>
            <person name="Rock D.L."/>
        </authorList>
    </citation>
    <scope>NUCLEOTIDE SEQUENCE [GENOMIC DNA]</scope>
</reference>
<gene>
    <name type="ordered locus">Pret-122</name>
</gene>
<accession>P0CA85</accession>
<organism>
    <name type="scientific">African swine fever virus (isolate Tick/South Africa/Pretoriuskop Pr4/1996)</name>
    <name type="common">ASFV</name>
    <dbReference type="NCBI Taxonomy" id="561443"/>
    <lineage>
        <taxon>Viruses</taxon>
        <taxon>Varidnaviria</taxon>
        <taxon>Bamfordvirae</taxon>
        <taxon>Nucleocytoviricota</taxon>
        <taxon>Pokkesviricetes</taxon>
        <taxon>Asfuvirales</taxon>
        <taxon>Asfarviridae</taxon>
        <taxon>Asfivirus</taxon>
        <taxon>African swine fever virus</taxon>
    </lineage>
</organism>
<sequence>MSVVVGGVEYSLNNWAKYEIKRRAAELESVNYYPHCEYVMPEDIVVSILGSKPNCPFLEALKRFHDFLKKRRIIFKGEYLVIPWMGAQDVADMIHHVENRINLDHLEDLAHMLKLITYHRSFDTCINQSFEHLYAFKFPDANIETHELKHIRQLEKKMYGYILRLEKLQTVLTFYIEFLLKQV</sequence>
<protein>
    <recommendedName>
        <fullName>Uncharacterized protein S183L</fullName>
        <shortName>pS183L</shortName>
    </recommendedName>
</protein>
<proteinExistence type="inferred from homology"/>